<dbReference type="EMBL" id="L77117">
    <property type="protein sequence ID" value="AAB98726.1"/>
    <property type="molecule type" value="Genomic_DNA"/>
</dbReference>
<dbReference type="PIR" id="B64391">
    <property type="entry name" value="B64391"/>
</dbReference>
<dbReference type="RefSeq" id="WP_010870235.1">
    <property type="nucleotide sequence ID" value="NC_000909.1"/>
</dbReference>
<dbReference type="SMR" id="Q58140"/>
<dbReference type="STRING" id="243232.MJ_0730"/>
<dbReference type="PaxDb" id="243232-MJ_0730"/>
<dbReference type="EnsemblBacteria" id="AAB98726">
    <property type="protein sequence ID" value="AAB98726"/>
    <property type="gene ID" value="MJ_0730"/>
</dbReference>
<dbReference type="GeneID" id="1451607"/>
<dbReference type="KEGG" id="mja:MJ_0730"/>
<dbReference type="eggNOG" id="arCOG01705">
    <property type="taxonomic scope" value="Archaea"/>
</dbReference>
<dbReference type="HOGENOM" id="CLU_098523_0_0_2"/>
<dbReference type="InParanoid" id="Q58140"/>
<dbReference type="OrthoDB" id="23478at2157"/>
<dbReference type="PhylomeDB" id="Q58140"/>
<dbReference type="Proteomes" id="UP000000805">
    <property type="component" value="Chromosome"/>
</dbReference>
<dbReference type="GO" id="GO:0071513">
    <property type="term" value="C:phosphopantothenoylcysteine decarboxylase complex"/>
    <property type="evidence" value="ECO:0000318"/>
    <property type="project" value="GO_Central"/>
</dbReference>
<dbReference type="GO" id="GO:0010181">
    <property type="term" value="F:FMN binding"/>
    <property type="evidence" value="ECO:0000318"/>
    <property type="project" value="GO_Central"/>
</dbReference>
<dbReference type="GO" id="GO:0004633">
    <property type="term" value="F:phosphopantothenoylcysteine decarboxylase activity"/>
    <property type="evidence" value="ECO:0000318"/>
    <property type="project" value="GO_Central"/>
</dbReference>
<dbReference type="GO" id="GO:0015937">
    <property type="term" value="P:coenzyme A biosynthetic process"/>
    <property type="evidence" value="ECO:0000318"/>
    <property type="project" value="GO_Central"/>
</dbReference>
<dbReference type="Gene3D" id="3.40.50.1950">
    <property type="entry name" value="Flavin prenyltransferase-like"/>
    <property type="match status" value="1"/>
</dbReference>
<dbReference type="InterPro" id="IPR014072">
    <property type="entry name" value="Archaeoflavo_AfpA"/>
</dbReference>
<dbReference type="InterPro" id="IPR036551">
    <property type="entry name" value="Flavin_trans-like"/>
</dbReference>
<dbReference type="InterPro" id="IPR003382">
    <property type="entry name" value="Flavoprotein"/>
</dbReference>
<dbReference type="NCBIfam" id="TIGR02699">
    <property type="entry name" value="archaeo_AfpA"/>
    <property type="match status" value="1"/>
</dbReference>
<dbReference type="PANTHER" id="PTHR14359:SF19">
    <property type="entry name" value="FLAVOPROTEIN"/>
    <property type="match status" value="1"/>
</dbReference>
<dbReference type="PANTHER" id="PTHR14359">
    <property type="entry name" value="HOMO-OLIGOMERIC FLAVIN CONTAINING CYS DECARBOXYLASE FAMILY"/>
    <property type="match status" value="1"/>
</dbReference>
<dbReference type="Pfam" id="PF02441">
    <property type="entry name" value="Flavoprotein"/>
    <property type="match status" value="1"/>
</dbReference>
<dbReference type="SUPFAM" id="SSF52507">
    <property type="entry name" value="Homo-oligomeric flavin-containing Cys decarboxylases, HFCD"/>
    <property type="match status" value="1"/>
</dbReference>
<proteinExistence type="predicted"/>
<name>Y730_METJA</name>
<reference key="1">
    <citation type="journal article" date="1996" name="Science">
        <title>Complete genome sequence of the methanogenic archaeon, Methanococcus jannaschii.</title>
        <authorList>
            <person name="Bult C.J."/>
            <person name="White O."/>
            <person name="Olsen G.J."/>
            <person name="Zhou L."/>
            <person name="Fleischmann R.D."/>
            <person name="Sutton G.G."/>
            <person name="Blake J.A."/>
            <person name="FitzGerald L.M."/>
            <person name="Clayton R.A."/>
            <person name="Gocayne J.D."/>
            <person name="Kerlavage A.R."/>
            <person name="Dougherty B.A."/>
            <person name="Tomb J.-F."/>
            <person name="Adams M.D."/>
            <person name="Reich C.I."/>
            <person name="Overbeek R."/>
            <person name="Kirkness E.F."/>
            <person name="Weinstock K.G."/>
            <person name="Merrick J.M."/>
            <person name="Glodek A."/>
            <person name="Scott J.L."/>
            <person name="Geoghagen N.S.M."/>
            <person name="Weidman J.F."/>
            <person name="Fuhrmann J.L."/>
            <person name="Nguyen D."/>
            <person name="Utterback T.R."/>
            <person name="Kelley J.M."/>
            <person name="Peterson J.D."/>
            <person name="Sadow P.W."/>
            <person name="Hanna M.C."/>
            <person name="Cotton M.D."/>
            <person name="Roberts K.M."/>
            <person name="Hurst M.A."/>
            <person name="Kaine B.P."/>
            <person name="Borodovsky M."/>
            <person name="Klenk H.-P."/>
            <person name="Fraser C.M."/>
            <person name="Smith H.O."/>
            <person name="Woese C.R."/>
            <person name="Venter J.C."/>
        </authorList>
    </citation>
    <scope>NUCLEOTIDE SEQUENCE [LARGE SCALE GENOMIC DNA]</scope>
    <source>
        <strain>ATCC 43067 / DSM 2661 / JAL-1 / JCM 10045 / NBRC 100440</strain>
    </source>
</reference>
<feature type="chain" id="PRO_0000107006" description="Uncharacterized protein MJ0730">
    <location>
        <begin position="1"/>
        <end position="186"/>
    </location>
</feature>
<organism>
    <name type="scientific">Methanocaldococcus jannaschii (strain ATCC 43067 / DSM 2661 / JAL-1 / JCM 10045 / NBRC 100440)</name>
    <name type="common">Methanococcus jannaschii</name>
    <dbReference type="NCBI Taxonomy" id="243232"/>
    <lineage>
        <taxon>Archaea</taxon>
        <taxon>Methanobacteriati</taxon>
        <taxon>Methanobacteriota</taxon>
        <taxon>Methanomada group</taxon>
        <taxon>Methanococci</taxon>
        <taxon>Methanococcales</taxon>
        <taxon>Methanocaldococcaceae</taxon>
        <taxon>Methanocaldococcus</taxon>
    </lineage>
</organism>
<evidence type="ECO:0000305" key="1"/>
<sequence>MLKIAWGITGCGDKLPEVVEIMKKLKNKYNLDVDIYLSKNAKIVVKWYKLWQVLEDEFYDLRVEVNANAPFLVGKLQTGKYDLFLVAPATANTTAKIAYGIADTLITNSVAQAMKAKVPVYIFPPDNKKGTVETILPGNKKLTLYMRDVDVENVERLRRMEGIEVLDKPEDIEKVILKHIEVKKQQ</sequence>
<keyword id="KW-1185">Reference proteome</keyword>
<accession>Q58140</accession>
<comment type="similarity">
    <text evidence="1">To M.jannaschii MJ0208.</text>
</comment>
<gene>
    <name type="ordered locus">MJ0730</name>
</gene>
<protein>
    <recommendedName>
        <fullName>Uncharacterized protein MJ0730</fullName>
    </recommendedName>
</protein>